<dbReference type="EMBL" id="AF482500">
    <property type="protein sequence ID" value="AAQ05925.1"/>
    <property type="molecule type" value="Genomic_DNA"/>
</dbReference>
<dbReference type="SMR" id="Q71KN3"/>
<dbReference type="GO" id="GO:0009535">
    <property type="term" value="C:chloroplast thylakoid membrane"/>
    <property type="evidence" value="ECO:0007669"/>
    <property type="project" value="UniProtKB-SubCell"/>
</dbReference>
<dbReference type="GO" id="GO:0045158">
    <property type="term" value="F:electron transporter, transferring electrons within cytochrome b6/f complex of photosystem II activity"/>
    <property type="evidence" value="ECO:0007669"/>
    <property type="project" value="UniProtKB-UniRule"/>
</dbReference>
<dbReference type="GO" id="GO:0046872">
    <property type="term" value="F:metal ion binding"/>
    <property type="evidence" value="ECO:0007669"/>
    <property type="project" value="UniProtKB-KW"/>
</dbReference>
<dbReference type="GO" id="GO:0016491">
    <property type="term" value="F:oxidoreductase activity"/>
    <property type="evidence" value="ECO:0007669"/>
    <property type="project" value="InterPro"/>
</dbReference>
<dbReference type="GO" id="GO:0015979">
    <property type="term" value="P:photosynthesis"/>
    <property type="evidence" value="ECO:0007669"/>
    <property type="project" value="UniProtKB-UniRule"/>
</dbReference>
<dbReference type="GO" id="GO:0022904">
    <property type="term" value="P:respiratory electron transport chain"/>
    <property type="evidence" value="ECO:0007669"/>
    <property type="project" value="InterPro"/>
</dbReference>
<dbReference type="CDD" id="cd00284">
    <property type="entry name" value="Cytochrome_b_N"/>
    <property type="match status" value="1"/>
</dbReference>
<dbReference type="FunFam" id="1.20.810.10:FF:000001">
    <property type="entry name" value="Cytochrome b6"/>
    <property type="match status" value="1"/>
</dbReference>
<dbReference type="Gene3D" id="1.20.810.10">
    <property type="entry name" value="Cytochrome Bc1 Complex, Chain C"/>
    <property type="match status" value="1"/>
</dbReference>
<dbReference type="HAMAP" id="MF_00633">
    <property type="entry name" value="Cytb6_f_cytb6"/>
    <property type="match status" value="1"/>
</dbReference>
<dbReference type="InterPro" id="IPR005797">
    <property type="entry name" value="Cyt_b/b6_N"/>
</dbReference>
<dbReference type="InterPro" id="IPR023530">
    <property type="entry name" value="Cyt_B6_PetB"/>
</dbReference>
<dbReference type="InterPro" id="IPR027387">
    <property type="entry name" value="Cytb/b6-like_sf"/>
</dbReference>
<dbReference type="InterPro" id="IPR048259">
    <property type="entry name" value="Cytochrome_b_N_euk/bac"/>
</dbReference>
<dbReference type="InterPro" id="IPR016174">
    <property type="entry name" value="Di-haem_cyt_TM"/>
</dbReference>
<dbReference type="NCBIfam" id="NF002990">
    <property type="entry name" value="PRK03735.1"/>
    <property type="match status" value="1"/>
</dbReference>
<dbReference type="PANTHER" id="PTHR19271">
    <property type="entry name" value="CYTOCHROME B"/>
    <property type="match status" value="1"/>
</dbReference>
<dbReference type="PANTHER" id="PTHR19271:SF16">
    <property type="entry name" value="CYTOCHROME B"/>
    <property type="match status" value="1"/>
</dbReference>
<dbReference type="Pfam" id="PF00033">
    <property type="entry name" value="Cytochrome_B"/>
    <property type="match status" value="1"/>
</dbReference>
<dbReference type="PIRSF" id="PIRSF000032">
    <property type="entry name" value="Cytochrome_b6"/>
    <property type="match status" value="1"/>
</dbReference>
<dbReference type="SUPFAM" id="SSF81342">
    <property type="entry name" value="Transmembrane di-heme cytochromes"/>
    <property type="match status" value="1"/>
</dbReference>
<dbReference type="PROSITE" id="PS51002">
    <property type="entry name" value="CYTB_NTER"/>
    <property type="match status" value="1"/>
</dbReference>
<comment type="function">
    <text evidence="1">Component of the cytochrome b6-f complex, which mediates electron transfer between photosystem II (PSII) and photosystem I (PSI), cyclic electron flow around PSI, and state transitions.</text>
</comment>
<comment type="cofactor">
    <cofactor evidence="1">
        <name>heme b</name>
        <dbReference type="ChEBI" id="CHEBI:60344"/>
    </cofactor>
    <text evidence="1">Binds 2 heme b groups non-covalently with two histidine residues as axial ligands.</text>
</comment>
<comment type="cofactor">
    <cofactor evidence="1">
        <name>heme c</name>
        <dbReference type="ChEBI" id="CHEBI:61717"/>
    </cofactor>
    <text evidence="1">Binds one heme group covalently by a single cysteine link with no axial amino acid ligand. This heme was named heme ci.</text>
</comment>
<comment type="subunit">
    <text evidence="1">The 4 large subunits of the cytochrome b6-f complex are cytochrome b6, subunit IV (17 kDa polypeptide, PetD), cytochrome f and the Rieske protein, while the 4 small subunits are PetG, PetL, PetM and PetN. The complex functions as a dimer.</text>
</comment>
<comment type="subcellular location">
    <subcellularLocation>
        <location evidence="1">Plastid</location>
        <location evidence="1">Chloroplast thylakoid membrane</location>
        <topology evidence="1">Multi-pass membrane protein</topology>
    </subcellularLocation>
</comment>
<comment type="miscellaneous">
    <text evidence="1">Heme 1 (or BH or b566) is high-potential and absorbs at about 566 nm, and heme 2 (or BL or b562) is low-potential and absorbs at about 562 nm.</text>
</comment>
<comment type="similarity">
    <text evidence="1">Belongs to the cytochrome b family. PetB subfamily.</text>
</comment>
<evidence type="ECO:0000255" key="1">
    <source>
        <dbReference type="HAMAP-Rule" id="MF_00633"/>
    </source>
</evidence>
<accession>Q71KN3</accession>
<gene>
    <name evidence="1" type="primary">petB</name>
</gene>
<protein>
    <recommendedName>
        <fullName evidence="1">Cytochrome b6</fullName>
    </recommendedName>
</protein>
<feature type="chain" id="PRO_0000061799" description="Cytochrome b6">
    <location>
        <begin position="1"/>
        <end position="215"/>
    </location>
</feature>
<feature type="transmembrane region" description="Helical" evidence="1">
    <location>
        <begin position="32"/>
        <end position="52"/>
    </location>
</feature>
<feature type="transmembrane region" description="Helical" evidence="1">
    <location>
        <begin position="90"/>
        <end position="110"/>
    </location>
</feature>
<feature type="transmembrane region" description="Helical" evidence="1">
    <location>
        <begin position="116"/>
        <end position="136"/>
    </location>
</feature>
<feature type="transmembrane region" description="Helical" evidence="1">
    <location>
        <begin position="186"/>
        <end position="206"/>
    </location>
</feature>
<feature type="binding site" description="covalent" evidence="1">
    <location>
        <position position="35"/>
    </location>
    <ligand>
        <name>heme c</name>
        <dbReference type="ChEBI" id="CHEBI:61717"/>
    </ligand>
</feature>
<feature type="binding site" description="axial binding residue" evidence="1">
    <location>
        <position position="86"/>
    </location>
    <ligand>
        <name>heme b</name>
        <dbReference type="ChEBI" id="CHEBI:60344"/>
        <label>2</label>
    </ligand>
    <ligandPart>
        <name>Fe</name>
        <dbReference type="ChEBI" id="CHEBI:18248"/>
    </ligandPart>
</feature>
<feature type="binding site" description="axial binding residue" evidence="1">
    <location>
        <position position="100"/>
    </location>
    <ligand>
        <name>heme b</name>
        <dbReference type="ChEBI" id="CHEBI:60344"/>
        <label>1</label>
    </ligand>
    <ligandPart>
        <name>Fe</name>
        <dbReference type="ChEBI" id="CHEBI:18248"/>
    </ligandPart>
</feature>
<feature type="binding site" description="axial binding residue" evidence="1">
    <location>
        <position position="187"/>
    </location>
    <ligand>
        <name>heme b</name>
        <dbReference type="ChEBI" id="CHEBI:60344"/>
        <label>2</label>
    </ligand>
    <ligandPart>
        <name>Fe</name>
        <dbReference type="ChEBI" id="CHEBI:18248"/>
    </ligandPart>
</feature>
<feature type="binding site" description="axial binding residue" evidence="1">
    <location>
        <position position="202"/>
    </location>
    <ligand>
        <name>heme b</name>
        <dbReference type="ChEBI" id="CHEBI:60344"/>
        <label>1</label>
    </ligand>
    <ligandPart>
        <name>Fe</name>
        <dbReference type="ChEBI" id="CHEBI:18248"/>
    </ligandPart>
</feature>
<keyword id="KW-0150">Chloroplast</keyword>
<keyword id="KW-0249">Electron transport</keyword>
<keyword id="KW-0349">Heme</keyword>
<keyword id="KW-0408">Iron</keyword>
<keyword id="KW-0472">Membrane</keyword>
<keyword id="KW-0479">Metal-binding</keyword>
<keyword id="KW-0602">Photosynthesis</keyword>
<keyword id="KW-0934">Plastid</keyword>
<keyword id="KW-0793">Thylakoid</keyword>
<keyword id="KW-0812">Transmembrane</keyword>
<keyword id="KW-1133">Transmembrane helix</keyword>
<keyword id="KW-0813">Transport</keyword>
<reference key="1">
    <citation type="submission" date="2002-02" db="EMBL/GenBank/DDBJ databases">
        <title>psbB gene cluster in Charophyceae.</title>
        <authorList>
            <person name="Lee J."/>
            <person name="Manhart J.R."/>
        </authorList>
    </citation>
    <scope>NUCLEOTIDE SEQUENCE [GENOMIC DNA]</scope>
</reference>
<organism>
    <name type="scientific">Klebsormidium bilatum</name>
    <name type="common">Filamentous green alga</name>
    <dbReference type="NCBI Taxonomy" id="201239"/>
    <lineage>
        <taxon>Eukaryota</taxon>
        <taxon>Viridiplantae</taxon>
        <taxon>Streptophyta</taxon>
        <taxon>Klebsormidiophyceae</taxon>
        <taxon>Klebsormidiales</taxon>
        <taxon>Klebsormidiaceae</taxon>
        <taxon>Klebsormidium</taxon>
    </lineage>
</organism>
<proteinExistence type="inferred from homology"/>
<sequence length="215" mass="24207">MGKVYDWFEERLEIQAIADDVTSKYVPPHVNIFYCLGGITLTCFLVQVATGFAMTFYYRPTVTEAFASVQYLMTDVNFGWLIRSVHRWSASMMVLMMILHVFRVYLTGGFKKPRELTWVTGVILAVLTVSFGVTGYSLPWDQVGYWAVKIVTGVPEAIPVIGSPLVELLRGSVSVGQSTLTRFYSLHTFVLPLLTAVFMLMHFLMIRKQGISGPL</sequence>
<geneLocation type="chloroplast"/>
<name>CYB6_KLEBI</name>